<organism>
    <name type="scientific">Populus trichocarpa</name>
    <name type="common">Western balsam poplar</name>
    <name type="synonym">Populus balsamifera subsp. trichocarpa</name>
    <dbReference type="NCBI Taxonomy" id="3694"/>
    <lineage>
        <taxon>Eukaryota</taxon>
        <taxon>Viridiplantae</taxon>
        <taxon>Streptophyta</taxon>
        <taxon>Embryophyta</taxon>
        <taxon>Tracheophyta</taxon>
        <taxon>Spermatophyta</taxon>
        <taxon>Magnoliopsida</taxon>
        <taxon>eudicotyledons</taxon>
        <taxon>Gunneridae</taxon>
        <taxon>Pentapetalae</taxon>
        <taxon>rosids</taxon>
        <taxon>fabids</taxon>
        <taxon>Malpighiales</taxon>
        <taxon>Salicaceae</taxon>
        <taxon>Saliceae</taxon>
        <taxon>Populus</taxon>
    </lineage>
</organism>
<dbReference type="EC" id="7.1.1.-" evidence="1"/>
<dbReference type="EMBL" id="EF489041">
    <property type="protein sequence ID" value="ABO36775.1"/>
    <property type="molecule type" value="Genomic_DNA"/>
</dbReference>
<dbReference type="SMR" id="P0CD35"/>
<dbReference type="FunCoup" id="P0CD35">
    <property type="interactions" value="16"/>
</dbReference>
<dbReference type="STRING" id="3694.P0CD35"/>
<dbReference type="KEGG" id="pop:4929721"/>
<dbReference type="KEGG" id="pop:4929763"/>
<dbReference type="InParanoid" id="P0CD35"/>
<dbReference type="OrthoDB" id="1621789at2759"/>
<dbReference type="Proteomes" id="UP000006729">
    <property type="component" value="Chloroplast"/>
</dbReference>
<dbReference type="ExpressionAtlas" id="P0CD35">
    <property type="expression patterns" value="differential"/>
</dbReference>
<dbReference type="GO" id="GO:0009535">
    <property type="term" value="C:chloroplast thylakoid membrane"/>
    <property type="evidence" value="ECO:0007669"/>
    <property type="project" value="UniProtKB-SubCell"/>
</dbReference>
<dbReference type="GO" id="GO:0008137">
    <property type="term" value="F:NADH dehydrogenase (ubiquinone) activity"/>
    <property type="evidence" value="ECO:0007669"/>
    <property type="project" value="InterPro"/>
</dbReference>
<dbReference type="GO" id="GO:0048038">
    <property type="term" value="F:quinone binding"/>
    <property type="evidence" value="ECO:0007669"/>
    <property type="project" value="UniProtKB-KW"/>
</dbReference>
<dbReference type="GO" id="GO:0042773">
    <property type="term" value="P:ATP synthesis coupled electron transport"/>
    <property type="evidence" value="ECO:0007669"/>
    <property type="project" value="InterPro"/>
</dbReference>
<dbReference type="GO" id="GO:0019684">
    <property type="term" value="P:photosynthesis, light reaction"/>
    <property type="evidence" value="ECO:0007669"/>
    <property type="project" value="UniProtKB-UniRule"/>
</dbReference>
<dbReference type="HAMAP" id="MF_00445">
    <property type="entry name" value="NDH1_NuoN_1"/>
    <property type="match status" value="1"/>
</dbReference>
<dbReference type="InterPro" id="IPR010096">
    <property type="entry name" value="NADH-Q_OxRdtase_suN/2"/>
</dbReference>
<dbReference type="InterPro" id="IPR001750">
    <property type="entry name" value="ND/Mrp_TM"/>
</dbReference>
<dbReference type="InterPro" id="IPR045693">
    <property type="entry name" value="Ndh2_N"/>
</dbReference>
<dbReference type="NCBIfam" id="TIGR01770">
    <property type="entry name" value="NDH_I_N"/>
    <property type="match status" value="1"/>
</dbReference>
<dbReference type="NCBIfam" id="NF002701">
    <property type="entry name" value="PRK02504.1"/>
    <property type="match status" value="1"/>
</dbReference>
<dbReference type="PANTHER" id="PTHR22773">
    <property type="entry name" value="NADH DEHYDROGENASE"/>
    <property type="match status" value="1"/>
</dbReference>
<dbReference type="Pfam" id="PF19530">
    <property type="entry name" value="Ndh2_N"/>
    <property type="match status" value="1"/>
</dbReference>
<dbReference type="Pfam" id="PF00361">
    <property type="entry name" value="Proton_antipo_M"/>
    <property type="match status" value="1"/>
</dbReference>
<dbReference type="PRINTS" id="PR01434">
    <property type="entry name" value="NADHDHGNASE5"/>
</dbReference>
<gene>
    <name evidence="1" type="primary">ndhB2</name>
    <name type="ordered locus">Poptr_cp094</name>
</gene>
<keyword id="KW-0150">Chloroplast</keyword>
<keyword id="KW-0472">Membrane</keyword>
<keyword id="KW-0520">NAD</keyword>
<keyword id="KW-0521">NADP</keyword>
<keyword id="KW-0934">Plastid</keyword>
<keyword id="KW-0618">Plastoquinone</keyword>
<keyword id="KW-0874">Quinone</keyword>
<keyword id="KW-1185">Reference proteome</keyword>
<keyword id="KW-0793">Thylakoid</keyword>
<keyword id="KW-1278">Translocase</keyword>
<keyword id="KW-0812">Transmembrane</keyword>
<keyword id="KW-1133">Transmembrane helix</keyword>
<keyword id="KW-0813">Transport</keyword>
<geneLocation type="chloroplast"/>
<name>NU2C2_POPTR</name>
<sequence length="510" mass="56474">MIWHVQNENFILDSTRIFMKAFHLLLFDGSFIFPECILIFGLILLLMIDSTSDQKDMPWLYFISSTSLVMSITALLFRWREEPMISFSGNFQTNNFNEIFQFLILLCSTLCIPLSVEYIECTEMAITEFLLFVLTATLGGMFLCGANDLITIFVAPECFSLCSYLLSGYTKKDVRSNEATTKYLLMGGASSSILVHGFSWLYGSSGGEIELQEIVNGLINTQMYNSPGISIALIFITVGIGFKLSPAPSHQWTPDVYEGSPTPVVAFLSVTSKVAASASATRIFDIPFYFSSNEWHLLLEILAILSMIVGNLIAITQTSMKRMLAYSSIGQIGYVIIGIIVGDSNGGYASMITYMLFYISMNLGTFACIVLFGLRTGTDNIRDYAGLYTKDPFLALSLALCLLSLGGLPPLAGFFGKLHLFWCGWQAGLYFLVSIGLLTSVLSIYYYLKIIKLLMTGQNQEITPHVRNYRGSPLRSNNSIELSMIVCVIASTIPGISMSPIIEIAQDTLF</sequence>
<comment type="function">
    <text evidence="1">NDH shuttles electrons from NAD(P)H:plastoquinone, via FMN and iron-sulfur (Fe-S) centers, to quinones in the photosynthetic chain and possibly in a chloroplast respiratory chain. The immediate electron acceptor for the enzyme in this species is believed to be plastoquinone. Couples the redox reaction to proton translocation, and thus conserves the redox energy in a proton gradient.</text>
</comment>
<comment type="catalytic activity">
    <reaction evidence="1">
        <text>a plastoquinone + NADH + (n+1) H(+)(in) = a plastoquinol + NAD(+) + n H(+)(out)</text>
        <dbReference type="Rhea" id="RHEA:42608"/>
        <dbReference type="Rhea" id="RHEA-COMP:9561"/>
        <dbReference type="Rhea" id="RHEA-COMP:9562"/>
        <dbReference type="ChEBI" id="CHEBI:15378"/>
        <dbReference type="ChEBI" id="CHEBI:17757"/>
        <dbReference type="ChEBI" id="CHEBI:57540"/>
        <dbReference type="ChEBI" id="CHEBI:57945"/>
        <dbReference type="ChEBI" id="CHEBI:62192"/>
    </reaction>
</comment>
<comment type="catalytic activity">
    <reaction evidence="1">
        <text>a plastoquinone + NADPH + (n+1) H(+)(in) = a plastoquinol + NADP(+) + n H(+)(out)</text>
        <dbReference type="Rhea" id="RHEA:42612"/>
        <dbReference type="Rhea" id="RHEA-COMP:9561"/>
        <dbReference type="Rhea" id="RHEA-COMP:9562"/>
        <dbReference type="ChEBI" id="CHEBI:15378"/>
        <dbReference type="ChEBI" id="CHEBI:17757"/>
        <dbReference type="ChEBI" id="CHEBI:57783"/>
        <dbReference type="ChEBI" id="CHEBI:58349"/>
        <dbReference type="ChEBI" id="CHEBI:62192"/>
    </reaction>
</comment>
<comment type="subunit">
    <text evidence="1">NDH is composed of at least 16 different subunits, 5 of which are encoded in the nucleus.</text>
</comment>
<comment type="subcellular location">
    <subcellularLocation>
        <location evidence="1">Plastid</location>
        <location evidence="1">Chloroplast thylakoid membrane</location>
        <topology evidence="1">Multi-pass membrane protein</topology>
    </subcellularLocation>
</comment>
<comment type="similarity">
    <text evidence="1">Belongs to the complex I subunit 2 family.</text>
</comment>
<reference key="1">
    <citation type="journal article" date="2006" name="Science">
        <title>The genome of black cottonwood, Populus trichocarpa (Torr. &amp; Gray).</title>
        <authorList>
            <person name="Tuskan G.A."/>
            <person name="Difazio S."/>
            <person name="Jansson S."/>
            <person name="Bohlmann J."/>
            <person name="Grigoriev I."/>
            <person name="Hellsten U."/>
            <person name="Putnam N."/>
            <person name="Ralph S."/>
            <person name="Rombauts S."/>
            <person name="Salamov A."/>
            <person name="Schein J."/>
            <person name="Sterck L."/>
            <person name="Aerts A."/>
            <person name="Bhalerao R.R."/>
            <person name="Bhalerao R.P."/>
            <person name="Blaudez D."/>
            <person name="Boerjan W."/>
            <person name="Brun A."/>
            <person name="Brunner A."/>
            <person name="Busov V."/>
            <person name="Campbell M."/>
            <person name="Carlson J."/>
            <person name="Chalot M."/>
            <person name="Chapman J."/>
            <person name="Chen G.-L."/>
            <person name="Cooper D."/>
            <person name="Coutinho P.M."/>
            <person name="Couturier J."/>
            <person name="Covert S."/>
            <person name="Cronk Q."/>
            <person name="Cunningham R."/>
            <person name="Davis J."/>
            <person name="Degroeve S."/>
            <person name="Dejardin A."/>
            <person name="dePamphilis C.W."/>
            <person name="Detter J."/>
            <person name="Dirks B."/>
            <person name="Dubchak I."/>
            <person name="Duplessis S."/>
            <person name="Ehlting J."/>
            <person name="Ellis B."/>
            <person name="Gendler K."/>
            <person name="Goodstein D."/>
            <person name="Gribskov M."/>
            <person name="Grimwood J."/>
            <person name="Groover A."/>
            <person name="Gunter L."/>
            <person name="Hamberger B."/>
            <person name="Heinze B."/>
            <person name="Helariutta Y."/>
            <person name="Henrissat B."/>
            <person name="Holligan D."/>
            <person name="Holt R."/>
            <person name="Huang W."/>
            <person name="Islam-Faridi N."/>
            <person name="Jones S."/>
            <person name="Jones-Rhoades M."/>
            <person name="Jorgensen R."/>
            <person name="Joshi C."/>
            <person name="Kangasjaervi J."/>
            <person name="Karlsson J."/>
            <person name="Kelleher C."/>
            <person name="Kirkpatrick R."/>
            <person name="Kirst M."/>
            <person name="Kohler A."/>
            <person name="Kalluri U."/>
            <person name="Larimer F."/>
            <person name="Leebens-Mack J."/>
            <person name="Leple J.-C."/>
            <person name="Locascio P."/>
            <person name="Lou Y."/>
            <person name="Lucas S."/>
            <person name="Martin F."/>
            <person name="Montanini B."/>
            <person name="Napoli C."/>
            <person name="Nelson D.R."/>
            <person name="Nelson C."/>
            <person name="Nieminen K."/>
            <person name="Nilsson O."/>
            <person name="Pereda V."/>
            <person name="Peter G."/>
            <person name="Philippe R."/>
            <person name="Pilate G."/>
            <person name="Poliakov A."/>
            <person name="Razumovskaya J."/>
            <person name="Richardson P."/>
            <person name="Rinaldi C."/>
            <person name="Ritland K."/>
            <person name="Rouze P."/>
            <person name="Ryaboy D."/>
            <person name="Schmutz J."/>
            <person name="Schrader J."/>
            <person name="Segerman B."/>
            <person name="Shin H."/>
            <person name="Siddiqui A."/>
            <person name="Sterky F."/>
            <person name="Terry A."/>
            <person name="Tsai C.-J."/>
            <person name="Uberbacher E."/>
            <person name="Unneberg P."/>
            <person name="Vahala J."/>
            <person name="Wall K."/>
            <person name="Wessler S."/>
            <person name="Yang G."/>
            <person name="Yin T."/>
            <person name="Douglas C."/>
            <person name="Marra M."/>
            <person name="Sandberg G."/>
            <person name="Van de Peer Y."/>
            <person name="Rokhsar D.S."/>
        </authorList>
    </citation>
    <scope>NUCLEOTIDE SEQUENCE [LARGE SCALE GENOMIC DNA]</scope>
    <source>
        <strain>cv. Nisqually</strain>
    </source>
</reference>
<evidence type="ECO:0000255" key="1">
    <source>
        <dbReference type="HAMAP-Rule" id="MF_00445"/>
    </source>
</evidence>
<feature type="chain" id="PRO_0000391305" description="NAD(P)H-quinone oxidoreductase subunit 2 B, chloroplastic">
    <location>
        <begin position="1"/>
        <end position="510"/>
    </location>
</feature>
<feature type="transmembrane region" description="Helical" evidence="1">
    <location>
        <begin position="24"/>
        <end position="44"/>
    </location>
</feature>
<feature type="transmembrane region" description="Helical" evidence="1">
    <location>
        <begin position="57"/>
        <end position="77"/>
    </location>
</feature>
<feature type="transmembrane region" description="Helical" evidence="1">
    <location>
        <begin position="99"/>
        <end position="119"/>
    </location>
</feature>
<feature type="transmembrane region" description="Helical" evidence="1">
    <location>
        <begin position="124"/>
        <end position="144"/>
    </location>
</feature>
<feature type="transmembrane region" description="Helical" evidence="1">
    <location>
        <begin position="149"/>
        <end position="169"/>
    </location>
</feature>
<feature type="transmembrane region" description="Helical" evidence="1">
    <location>
        <begin position="183"/>
        <end position="203"/>
    </location>
</feature>
<feature type="transmembrane region" description="Helical" evidence="1">
    <location>
        <begin position="227"/>
        <end position="247"/>
    </location>
</feature>
<feature type="transmembrane region" description="Helical" evidence="1">
    <location>
        <begin position="295"/>
        <end position="315"/>
    </location>
</feature>
<feature type="transmembrane region" description="Helical" evidence="1">
    <location>
        <begin position="323"/>
        <end position="343"/>
    </location>
</feature>
<feature type="transmembrane region" description="Helical" evidence="1">
    <location>
        <begin position="354"/>
        <end position="374"/>
    </location>
</feature>
<feature type="transmembrane region" description="Helical" evidence="1">
    <location>
        <begin position="395"/>
        <end position="415"/>
    </location>
</feature>
<feature type="transmembrane region" description="Helical" evidence="1">
    <location>
        <begin position="418"/>
        <end position="438"/>
    </location>
</feature>
<feature type="transmembrane region" description="Helical" evidence="1">
    <location>
        <begin position="482"/>
        <end position="502"/>
    </location>
</feature>
<accession>P0CD35</accession>
<accession>A4GYV7</accession>
<protein>
    <recommendedName>
        <fullName evidence="1">NAD(P)H-quinone oxidoreductase subunit 2 B, chloroplastic</fullName>
        <ecNumber evidence="1">7.1.1.-</ecNumber>
    </recommendedName>
    <alternativeName>
        <fullName evidence="1">NAD(P)H dehydrogenase, subunit 2 B</fullName>
    </alternativeName>
    <alternativeName>
        <fullName evidence="1">NADH-plastoquinone oxidoreductase subunit 2 B</fullName>
    </alternativeName>
</protein>
<proteinExistence type="inferred from homology"/>